<reference key="1">
    <citation type="submission" date="2007-03" db="EMBL/GenBank/DDBJ databases">
        <title>Complete sequence of Prosthecochloris vibrioformis DSM 265.</title>
        <authorList>
            <consortium name="US DOE Joint Genome Institute"/>
            <person name="Copeland A."/>
            <person name="Lucas S."/>
            <person name="Lapidus A."/>
            <person name="Barry K."/>
            <person name="Detter J.C."/>
            <person name="Glavina del Rio T."/>
            <person name="Hammon N."/>
            <person name="Israni S."/>
            <person name="Pitluck S."/>
            <person name="Schmutz J."/>
            <person name="Larimer F."/>
            <person name="Land M."/>
            <person name="Hauser L."/>
            <person name="Mikhailova N."/>
            <person name="Li T."/>
            <person name="Overmann J."/>
            <person name="Schuster S.C."/>
            <person name="Bryant D.A."/>
            <person name="Richardson P."/>
        </authorList>
    </citation>
    <scope>NUCLEOTIDE SEQUENCE [LARGE SCALE GENOMIC DNA]</scope>
    <source>
        <strain>DSM 265 / 1930</strain>
    </source>
</reference>
<gene>
    <name evidence="1" type="primary">rplF</name>
    <name type="ordered locus">Cvib_0261</name>
</gene>
<evidence type="ECO:0000255" key="1">
    <source>
        <dbReference type="HAMAP-Rule" id="MF_01365"/>
    </source>
</evidence>
<evidence type="ECO:0000305" key="2"/>
<protein>
    <recommendedName>
        <fullName evidence="1">Large ribosomal subunit protein uL6</fullName>
    </recommendedName>
    <alternativeName>
        <fullName evidence="2">50S ribosomal protein L6</fullName>
    </alternativeName>
</protein>
<name>RL6_CHLPM</name>
<accession>A4SCS4</accession>
<comment type="function">
    <text evidence="1">This protein binds to the 23S rRNA, and is important in its secondary structure. It is located near the subunit interface in the base of the L7/L12 stalk, and near the tRNA binding site of the peptidyltransferase center.</text>
</comment>
<comment type="subunit">
    <text evidence="1">Part of the 50S ribosomal subunit.</text>
</comment>
<comment type="similarity">
    <text evidence="1">Belongs to the universal ribosomal protein uL6 family.</text>
</comment>
<sequence length="179" mass="19691">MSRIGKMPIALAKEAKLEISEGNLRVSGPKGVLEQALVEEVKVLQEEGLVKVERINDSKRSRAMHGLYRMLLSNMIEGVTKGFTRKLEIAGVGFRAEMKGDLLALTLGFSHMIYFKAPEGVKLETPDPVTVLVSGIDKALIGQVAAKIRSFRKPEPYRGKGIKYEGEVIRRKEGKAAGK</sequence>
<keyword id="KW-0687">Ribonucleoprotein</keyword>
<keyword id="KW-0689">Ribosomal protein</keyword>
<keyword id="KW-0694">RNA-binding</keyword>
<keyword id="KW-0699">rRNA-binding</keyword>
<organism>
    <name type="scientific">Chlorobium phaeovibrioides (strain DSM 265 / 1930)</name>
    <name type="common">Prosthecochloris vibrioformis (strain DSM 265)</name>
    <dbReference type="NCBI Taxonomy" id="290318"/>
    <lineage>
        <taxon>Bacteria</taxon>
        <taxon>Pseudomonadati</taxon>
        <taxon>Chlorobiota</taxon>
        <taxon>Chlorobiia</taxon>
        <taxon>Chlorobiales</taxon>
        <taxon>Chlorobiaceae</taxon>
        <taxon>Chlorobium/Pelodictyon group</taxon>
        <taxon>Chlorobium</taxon>
    </lineage>
</organism>
<feature type="chain" id="PRO_1000087055" description="Large ribosomal subunit protein uL6">
    <location>
        <begin position="1"/>
        <end position="179"/>
    </location>
</feature>
<dbReference type="EMBL" id="CP000607">
    <property type="protein sequence ID" value="ABP36283.1"/>
    <property type="molecule type" value="Genomic_DNA"/>
</dbReference>
<dbReference type="SMR" id="A4SCS4"/>
<dbReference type="STRING" id="290318.Cvib_0261"/>
<dbReference type="KEGG" id="pvi:Cvib_0261"/>
<dbReference type="eggNOG" id="COG0097">
    <property type="taxonomic scope" value="Bacteria"/>
</dbReference>
<dbReference type="HOGENOM" id="CLU_065464_1_2_10"/>
<dbReference type="OrthoDB" id="9805007at2"/>
<dbReference type="GO" id="GO:0022625">
    <property type="term" value="C:cytosolic large ribosomal subunit"/>
    <property type="evidence" value="ECO:0007669"/>
    <property type="project" value="TreeGrafter"/>
</dbReference>
<dbReference type="GO" id="GO:0019843">
    <property type="term" value="F:rRNA binding"/>
    <property type="evidence" value="ECO:0007669"/>
    <property type="project" value="UniProtKB-UniRule"/>
</dbReference>
<dbReference type="GO" id="GO:0003735">
    <property type="term" value="F:structural constituent of ribosome"/>
    <property type="evidence" value="ECO:0007669"/>
    <property type="project" value="InterPro"/>
</dbReference>
<dbReference type="GO" id="GO:0002181">
    <property type="term" value="P:cytoplasmic translation"/>
    <property type="evidence" value="ECO:0007669"/>
    <property type="project" value="TreeGrafter"/>
</dbReference>
<dbReference type="FunFam" id="3.90.930.12:FF:000001">
    <property type="entry name" value="50S ribosomal protein L6"/>
    <property type="match status" value="1"/>
</dbReference>
<dbReference type="Gene3D" id="3.90.930.12">
    <property type="entry name" value="Ribosomal protein L6, alpha-beta domain"/>
    <property type="match status" value="2"/>
</dbReference>
<dbReference type="HAMAP" id="MF_01365_B">
    <property type="entry name" value="Ribosomal_uL6_B"/>
    <property type="match status" value="1"/>
</dbReference>
<dbReference type="InterPro" id="IPR000702">
    <property type="entry name" value="Ribosomal_uL6-like"/>
</dbReference>
<dbReference type="InterPro" id="IPR036789">
    <property type="entry name" value="Ribosomal_uL6-like_a/b-dom_sf"/>
</dbReference>
<dbReference type="InterPro" id="IPR020040">
    <property type="entry name" value="Ribosomal_uL6_a/b-dom"/>
</dbReference>
<dbReference type="InterPro" id="IPR019906">
    <property type="entry name" value="Ribosomal_uL6_bac-type"/>
</dbReference>
<dbReference type="NCBIfam" id="TIGR03654">
    <property type="entry name" value="L6_bact"/>
    <property type="match status" value="1"/>
</dbReference>
<dbReference type="PANTHER" id="PTHR11655">
    <property type="entry name" value="60S/50S RIBOSOMAL PROTEIN L6/L9"/>
    <property type="match status" value="1"/>
</dbReference>
<dbReference type="PANTHER" id="PTHR11655:SF14">
    <property type="entry name" value="LARGE RIBOSOMAL SUBUNIT PROTEIN UL6M"/>
    <property type="match status" value="1"/>
</dbReference>
<dbReference type="Pfam" id="PF00347">
    <property type="entry name" value="Ribosomal_L6"/>
    <property type="match status" value="2"/>
</dbReference>
<dbReference type="PIRSF" id="PIRSF002162">
    <property type="entry name" value="Ribosomal_L6"/>
    <property type="match status" value="1"/>
</dbReference>
<dbReference type="PRINTS" id="PR00059">
    <property type="entry name" value="RIBOSOMALL6"/>
</dbReference>
<dbReference type="SUPFAM" id="SSF56053">
    <property type="entry name" value="Ribosomal protein L6"/>
    <property type="match status" value="2"/>
</dbReference>
<proteinExistence type="inferred from homology"/>